<name>RBSD_ENTFA</name>
<evidence type="ECO:0000255" key="1">
    <source>
        <dbReference type="HAMAP-Rule" id="MF_01661"/>
    </source>
</evidence>
<accession>Q82ZT7</accession>
<sequence length="131" mass="14686">MKKTKVINSDISRVIAQMGHFDKLSIGDAGMPVPRTTEKIDLAVTNGVPSFMEVLNNVLEELAVQRIYLAEEIKTENPDMLAAIETRLPETPISFIPHTEMKQELNNCHAFIRTGEMTPYANILLESNVVF</sequence>
<reference key="1">
    <citation type="journal article" date="2003" name="Science">
        <title>Role of mobile DNA in the evolution of vancomycin-resistant Enterococcus faecalis.</title>
        <authorList>
            <person name="Paulsen I.T."/>
            <person name="Banerjei L."/>
            <person name="Myers G.S.A."/>
            <person name="Nelson K.E."/>
            <person name="Seshadri R."/>
            <person name="Read T.D."/>
            <person name="Fouts D.E."/>
            <person name="Eisen J.A."/>
            <person name="Gill S.R."/>
            <person name="Heidelberg J.F."/>
            <person name="Tettelin H."/>
            <person name="Dodson R.J."/>
            <person name="Umayam L.A."/>
            <person name="Brinkac L.M."/>
            <person name="Beanan M.J."/>
            <person name="Daugherty S.C."/>
            <person name="DeBoy R.T."/>
            <person name="Durkin S.A."/>
            <person name="Kolonay J.F."/>
            <person name="Madupu R."/>
            <person name="Nelson W.C."/>
            <person name="Vamathevan J.J."/>
            <person name="Tran B."/>
            <person name="Upton J."/>
            <person name="Hansen T."/>
            <person name="Shetty J."/>
            <person name="Khouri H.M."/>
            <person name="Utterback T.R."/>
            <person name="Radune D."/>
            <person name="Ketchum K.A."/>
            <person name="Dougherty B.A."/>
            <person name="Fraser C.M."/>
        </authorList>
    </citation>
    <scope>NUCLEOTIDE SEQUENCE [LARGE SCALE GENOMIC DNA]</scope>
    <source>
        <strain>ATCC 700802 / V583</strain>
    </source>
</reference>
<proteinExistence type="inferred from homology"/>
<comment type="function">
    <text evidence="1">Catalyzes the interconversion of beta-pyran and beta-furan forms of D-ribose.</text>
</comment>
<comment type="catalytic activity">
    <reaction evidence="1">
        <text>beta-D-ribopyranose = beta-D-ribofuranose</text>
        <dbReference type="Rhea" id="RHEA:25432"/>
        <dbReference type="ChEBI" id="CHEBI:27476"/>
        <dbReference type="ChEBI" id="CHEBI:47002"/>
        <dbReference type="EC" id="5.4.99.62"/>
    </reaction>
</comment>
<comment type="pathway">
    <text evidence="1">Carbohydrate metabolism; D-ribose degradation; D-ribose 5-phosphate from beta-D-ribopyranose: step 1/2.</text>
</comment>
<comment type="subunit">
    <text evidence="1">Homodecamer.</text>
</comment>
<comment type="subcellular location">
    <subcellularLocation>
        <location evidence="1">Cytoplasm</location>
    </subcellularLocation>
</comment>
<comment type="similarity">
    <text evidence="1">Belongs to the RbsD / FucU family. RbsD subfamily.</text>
</comment>
<gene>
    <name evidence="1" type="primary">rbsD</name>
    <name type="ordered locus">EF_2960</name>
</gene>
<feature type="chain" id="PRO_0000346194" description="D-ribose pyranase">
    <location>
        <begin position="1"/>
        <end position="131"/>
    </location>
</feature>
<feature type="active site" description="Proton donor" evidence="1">
    <location>
        <position position="20"/>
    </location>
</feature>
<feature type="binding site" evidence="1">
    <location>
        <position position="28"/>
    </location>
    <ligand>
        <name>substrate</name>
    </ligand>
</feature>
<feature type="binding site" evidence="1">
    <location>
        <position position="98"/>
    </location>
    <ligand>
        <name>substrate</name>
    </ligand>
</feature>
<feature type="binding site" evidence="1">
    <location>
        <begin position="120"/>
        <end position="122"/>
    </location>
    <ligand>
        <name>substrate</name>
    </ligand>
</feature>
<dbReference type="EC" id="5.4.99.62" evidence="1"/>
<dbReference type="EMBL" id="AE016830">
    <property type="protein sequence ID" value="AAO82648.1"/>
    <property type="molecule type" value="Genomic_DNA"/>
</dbReference>
<dbReference type="RefSeq" id="NP_816578.1">
    <property type="nucleotide sequence ID" value="NC_004668.1"/>
</dbReference>
<dbReference type="RefSeq" id="WP_002359153.1">
    <property type="nucleotide sequence ID" value="NZ_KE136524.1"/>
</dbReference>
<dbReference type="SMR" id="Q82ZT7"/>
<dbReference type="STRING" id="226185.EF_2960"/>
<dbReference type="EnsemblBacteria" id="AAO82648">
    <property type="protein sequence ID" value="AAO82648"/>
    <property type="gene ID" value="EF_2960"/>
</dbReference>
<dbReference type="GeneID" id="60894864"/>
<dbReference type="KEGG" id="efa:EF2960"/>
<dbReference type="PATRIC" id="fig|226185.45.peg.612"/>
<dbReference type="eggNOG" id="COG1869">
    <property type="taxonomic scope" value="Bacteria"/>
</dbReference>
<dbReference type="HOGENOM" id="CLU_135498_0_0_9"/>
<dbReference type="UniPathway" id="UPA00916">
    <property type="reaction ID" value="UER00888"/>
</dbReference>
<dbReference type="Proteomes" id="UP000001415">
    <property type="component" value="Chromosome"/>
</dbReference>
<dbReference type="GO" id="GO:0005829">
    <property type="term" value="C:cytosol"/>
    <property type="evidence" value="ECO:0007669"/>
    <property type="project" value="TreeGrafter"/>
</dbReference>
<dbReference type="GO" id="GO:0062193">
    <property type="term" value="F:D-ribose pyranase activity"/>
    <property type="evidence" value="ECO:0007669"/>
    <property type="project" value="UniProtKB-EC"/>
</dbReference>
<dbReference type="GO" id="GO:0016872">
    <property type="term" value="F:intramolecular lyase activity"/>
    <property type="evidence" value="ECO:0007669"/>
    <property type="project" value="UniProtKB-UniRule"/>
</dbReference>
<dbReference type="GO" id="GO:0048029">
    <property type="term" value="F:monosaccharide binding"/>
    <property type="evidence" value="ECO:0007669"/>
    <property type="project" value="InterPro"/>
</dbReference>
<dbReference type="GO" id="GO:0019303">
    <property type="term" value="P:D-ribose catabolic process"/>
    <property type="evidence" value="ECO:0007669"/>
    <property type="project" value="UniProtKB-UniRule"/>
</dbReference>
<dbReference type="FunFam" id="3.40.1650.10:FF:000004">
    <property type="entry name" value="D-ribose pyranase"/>
    <property type="match status" value="1"/>
</dbReference>
<dbReference type="Gene3D" id="3.40.1650.10">
    <property type="entry name" value="RbsD-like domain"/>
    <property type="match status" value="1"/>
</dbReference>
<dbReference type="HAMAP" id="MF_01661">
    <property type="entry name" value="D_rib_pyranase"/>
    <property type="match status" value="1"/>
</dbReference>
<dbReference type="InterPro" id="IPR023064">
    <property type="entry name" value="D-ribose_pyranase"/>
</dbReference>
<dbReference type="InterPro" id="IPR023750">
    <property type="entry name" value="RbsD-like_sf"/>
</dbReference>
<dbReference type="InterPro" id="IPR007721">
    <property type="entry name" value="RbsD_FucU"/>
</dbReference>
<dbReference type="NCBIfam" id="NF008761">
    <property type="entry name" value="PRK11797.1"/>
    <property type="match status" value="1"/>
</dbReference>
<dbReference type="PANTHER" id="PTHR37831">
    <property type="entry name" value="D-RIBOSE PYRANASE"/>
    <property type="match status" value="1"/>
</dbReference>
<dbReference type="PANTHER" id="PTHR37831:SF1">
    <property type="entry name" value="D-RIBOSE PYRANASE"/>
    <property type="match status" value="1"/>
</dbReference>
<dbReference type="Pfam" id="PF05025">
    <property type="entry name" value="RbsD_FucU"/>
    <property type="match status" value="1"/>
</dbReference>
<dbReference type="SUPFAM" id="SSF102546">
    <property type="entry name" value="RbsD-like"/>
    <property type="match status" value="1"/>
</dbReference>
<keyword id="KW-0119">Carbohydrate metabolism</keyword>
<keyword id="KW-0963">Cytoplasm</keyword>
<keyword id="KW-0413">Isomerase</keyword>
<keyword id="KW-1185">Reference proteome</keyword>
<organism>
    <name type="scientific">Enterococcus faecalis (strain ATCC 700802 / V583)</name>
    <dbReference type="NCBI Taxonomy" id="226185"/>
    <lineage>
        <taxon>Bacteria</taxon>
        <taxon>Bacillati</taxon>
        <taxon>Bacillota</taxon>
        <taxon>Bacilli</taxon>
        <taxon>Lactobacillales</taxon>
        <taxon>Enterococcaceae</taxon>
        <taxon>Enterococcus</taxon>
    </lineage>
</organism>
<protein>
    <recommendedName>
        <fullName evidence="1">D-ribose pyranase</fullName>
        <ecNumber evidence="1">5.4.99.62</ecNumber>
    </recommendedName>
</protein>